<dbReference type="EC" id="5.2.1.8" evidence="1"/>
<dbReference type="EMBL" id="AP006618">
    <property type="protein sequence ID" value="BAD56177.1"/>
    <property type="molecule type" value="Genomic_DNA"/>
</dbReference>
<dbReference type="SMR" id="Q5Z064"/>
<dbReference type="STRING" id="247156.NFA_13320"/>
<dbReference type="KEGG" id="nfa:NFA_13320"/>
<dbReference type="eggNOG" id="COG0544">
    <property type="taxonomic scope" value="Bacteria"/>
</dbReference>
<dbReference type="HOGENOM" id="CLU_033058_3_0_11"/>
<dbReference type="Proteomes" id="UP000006820">
    <property type="component" value="Chromosome"/>
</dbReference>
<dbReference type="GO" id="GO:0005737">
    <property type="term" value="C:cytoplasm"/>
    <property type="evidence" value="ECO:0007669"/>
    <property type="project" value="UniProtKB-SubCell"/>
</dbReference>
<dbReference type="GO" id="GO:0003755">
    <property type="term" value="F:peptidyl-prolyl cis-trans isomerase activity"/>
    <property type="evidence" value="ECO:0007669"/>
    <property type="project" value="UniProtKB-UniRule"/>
</dbReference>
<dbReference type="GO" id="GO:0044183">
    <property type="term" value="F:protein folding chaperone"/>
    <property type="evidence" value="ECO:0007669"/>
    <property type="project" value="TreeGrafter"/>
</dbReference>
<dbReference type="GO" id="GO:0043022">
    <property type="term" value="F:ribosome binding"/>
    <property type="evidence" value="ECO:0007669"/>
    <property type="project" value="TreeGrafter"/>
</dbReference>
<dbReference type="GO" id="GO:0051083">
    <property type="term" value="P:'de novo' cotranslational protein folding"/>
    <property type="evidence" value="ECO:0007669"/>
    <property type="project" value="TreeGrafter"/>
</dbReference>
<dbReference type="GO" id="GO:0051301">
    <property type="term" value="P:cell division"/>
    <property type="evidence" value="ECO:0007669"/>
    <property type="project" value="UniProtKB-KW"/>
</dbReference>
<dbReference type="GO" id="GO:0061077">
    <property type="term" value="P:chaperone-mediated protein folding"/>
    <property type="evidence" value="ECO:0007669"/>
    <property type="project" value="TreeGrafter"/>
</dbReference>
<dbReference type="GO" id="GO:0015031">
    <property type="term" value="P:protein transport"/>
    <property type="evidence" value="ECO:0007669"/>
    <property type="project" value="UniProtKB-UniRule"/>
</dbReference>
<dbReference type="GO" id="GO:0043335">
    <property type="term" value="P:protein unfolding"/>
    <property type="evidence" value="ECO:0007669"/>
    <property type="project" value="TreeGrafter"/>
</dbReference>
<dbReference type="Gene3D" id="3.10.50.40">
    <property type="match status" value="1"/>
</dbReference>
<dbReference type="Gene3D" id="3.30.70.1050">
    <property type="entry name" value="Trigger factor ribosome-binding domain"/>
    <property type="match status" value="1"/>
</dbReference>
<dbReference type="Gene3D" id="1.10.3120.10">
    <property type="entry name" value="Trigger factor, C-terminal domain"/>
    <property type="match status" value="1"/>
</dbReference>
<dbReference type="HAMAP" id="MF_00303">
    <property type="entry name" value="Trigger_factor_Tig"/>
    <property type="match status" value="1"/>
</dbReference>
<dbReference type="InterPro" id="IPR046357">
    <property type="entry name" value="PPIase_dom_sf"/>
</dbReference>
<dbReference type="InterPro" id="IPR001179">
    <property type="entry name" value="PPIase_FKBP_dom"/>
</dbReference>
<dbReference type="InterPro" id="IPR005215">
    <property type="entry name" value="Trig_fac"/>
</dbReference>
<dbReference type="InterPro" id="IPR008880">
    <property type="entry name" value="Trigger_fac_C"/>
</dbReference>
<dbReference type="InterPro" id="IPR037041">
    <property type="entry name" value="Trigger_fac_C_sf"/>
</dbReference>
<dbReference type="InterPro" id="IPR008881">
    <property type="entry name" value="Trigger_fac_ribosome-bd_bac"/>
</dbReference>
<dbReference type="InterPro" id="IPR036611">
    <property type="entry name" value="Trigger_fac_ribosome-bd_sf"/>
</dbReference>
<dbReference type="InterPro" id="IPR027304">
    <property type="entry name" value="Trigger_fact/SurA_dom_sf"/>
</dbReference>
<dbReference type="NCBIfam" id="TIGR00115">
    <property type="entry name" value="tig"/>
    <property type="match status" value="1"/>
</dbReference>
<dbReference type="PANTHER" id="PTHR30560">
    <property type="entry name" value="TRIGGER FACTOR CHAPERONE AND PEPTIDYL-PROLYL CIS/TRANS ISOMERASE"/>
    <property type="match status" value="1"/>
</dbReference>
<dbReference type="PANTHER" id="PTHR30560:SF3">
    <property type="entry name" value="TRIGGER FACTOR-LIKE PROTEIN TIG, CHLOROPLASTIC"/>
    <property type="match status" value="1"/>
</dbReference>
<dbReference type="Pfam" id="PF00254">
    <property type="entry name" value="FKBP_C"/>
    <property type="match status" value="1"/>
</dbReference>
<dbReference type="Pfam" id="PF05698">
    <property type="entry name" value="Trigger_C"/>
    <property type="match status" value="1"/>
</dbReference>
<dbReference type="Pfam" id="PF05697">
    <property type="entry name" value="Trigger_N"/>
    <property type="match status" value="1"/>
</dbReference>
<dbReference type="PIRSF" id="PIRSF003095">
    <property type="entry name" value="Trigger_factor"/>
    <property type="match status" value="1"/>
</dbReference>
<dbReference type="SUPFAM" id="SSF54534">
    <property type="entry name" value="FKBP-like"/>
    <property type="match status" value="1"/>
</dbReference>
<dbReference type="SUPFAM" id="SSF109998">
    <property type="entry name" value="Triger factor/SurA peptide-binding domain-like"/>
    <property type="match status" value="1"/>
</dbReference>
<dbReference type="SUPFAM" id="SSF102735">
    <property type="entry name" value="Trigger factor ribosome-binding domain"/>
    <property type="match status" value="1"/>
</dbReference>
<dbReference type="PROSITE" id="PS50059">
    <property type="entry name" value="FKBP_PPIASE"/>
    <property type="match status" value="1"/>
</dbReference>
<protein>
    <recommendedName>
        <fullName evidence="1">Trigger factor</fullName>
        <shortName evidence="1">TF</shortName>
        <ecNumber evidence="1">5.2.1.8</ecNumber>
    </recommendedName>
    <alternativeName>
        <fullName evidence="1">PPIase</fullName>
    </alternativeName>
</protein>
<comment type="function">
    <text evidence="1">Involved in protein export. Acts as a chaperone by maintaining the newly synthesized protein in an open conformation. Functions as a peptidyl-prolyl cis-trans isomerase.</text>
</comment>
<comment type="catalytic activity">
    <reaction evidence="1">
        <text>[protein]-peptidylproline (omega=180) = [protein]-peptidylproline (omega=0)</text>
        <dbReference type="Rhea" id="RHEA:16237"/>
        <dbReference type="Rhea" id="RHEA-COMP:10747"/>
        <dbReference type="Rhea" id="RHEA-COMP:10748"/>
        <dbReference type="ChEBI" id="CHEBI:83833"/>
        <dbReference type="ChEBI" id="CHEBI:83834"/>
        <dbReference type="EC" id="5.2.1.8"/>
    </reaction>
</comment>
<comment type="subcellular location">
    <subcellularLocation>
        <location>Cytoplasm</location>
    </subcellularLocation>
    <text evidence="1">About half TF is bound to the ribosome near the polypeptide exit tunnel while the other half is free in the cytoplasm.</text>
</comment>
<comment type="domain">
    <text evidence="1">Consists of 3 domains; the N-terminus binds the ribosome, the middle domain has PPIase activity, while the C-terminus has intrinsic chaperone activity on its own.</text>
</comment>
<comment type="similarity">
    <text evidence="1">Belongs to the FKBP-type PPIase family. Tig subfamily.</text>
</comment>
<name>TIG_NOCFA</name>
<accession>Q5Z064</accession>
<keyword id="KW-0131">Cell cycle</keyword>
<keyword id="KW-0132">Cell division</keyword>
<keyword id="KW-0143">Chaperone</keyword>
<keyword id="KW-0963">Cytoplasm</keyword>
<keyword id="KW-0413">Isomerase</keyword>
<keyword id="KW-1185">Reference proteome</keyword>
<keyword id="KW-0697">Rotamase</keyword>
<proteinExistence type="inferred from homology"/>
<evidence type="ECO:0000255" key="1">
    <source>
        <dbReference type="HAMAP-Rule" id="MF_00303"/>
    </source>
</evidence>
<evidence type="ECO:0000256" key="2">
    <source>
        <dbReference type="SAM" id="MobiDB-lite"/>
    </source>
</evidence>
<reference key="1">
    <citation type="journal article" date="2004" name="Proc. Natl. Acad. Sci. U.S.A.">
        <title>The complete genomic sequence of Nocardia farcinica IFM 10152.</title>
        <authorList>
            <person name="Ishikawa J."/>
            <person name="Yamashita A."/>
            <person name="Mikami Y."/>
            <person name="Hoshino Y."/>
            <person name="Kurita H."/>
            <person name="Hotta K."/>
            <person name="Shiba T."/>
            <person name="Hattori M."/>
        </authorList>
    </citation>
    <scope>NUCLEOTIDE SEQUENCE [LARGE SCALE GENOMIC DNA]</scope>
    <source>
        <strain>IFM 10152</strain>
    </source>
</reference>
<feature type="chain" id="PRO_0000179396" description="Trigger factor">
    <location>
        <begin position="1"/>
        <end position="465"/>
    </location>
</feature>
<feature type="domain" description="PPIase FKBP-type" evidence="1">
    <location>
        <begin position="164"/>
        <end position="245"/>
    </location>
</feature>
<feature type="region of interest" description="Disordered" evidence="2">
    <location>
        <begin position="430"/>
        <end position="465"/>
    </location>
</feature>
<feature type="compositionally biased region" description="Low complexity" evidence="2">
    <location>
        <begin position="440"/>
        <end position="455"/>
    </location>
</feature>
<feature type="compositionally biased region" description="Basic and acidic residues" evidence="2">
    <location>
        <begin position="456"/>
        <end position="465"/>
    </location>
</feature>
<gene>
    <name evidence="1" type="primary">tig</name>
    <name type="ordered locus">NFA_13320</name>
</gene>
<organism>
    <name type="scientific">Nocardia farcinica (strain IFM 10152)</name>
    <dbReference type="NCBI Taxonomy" id="247156"/>
    <lineage>
        <taxon>Bacteria</taxon>
        <taxon>Bacillati</taxon>
        <taxon>Actinomycetota</taxon>
        <taxon>Actinomycetes</taxon>
        <taxon>Mycobacteriales</taxon>
        <taxon>Nocardiaceae</taxon>
        <taxon>Nocardia</taxon>
    </lineage>
</organism>
<sequence length="465" mass="50274">MSVKSTVEQLSPTRVRINVEVPFEELKPDFDRAYKALAKQVRIPGFRPGKAPAKLLEARLGRGAILEQVVNDVLPARYSEAVTTSEVKVIGQPDIEITKIEDGQEFAFSAEVDVRPEIALPDYADLEVTVDAFTIGDEDIEEQLNSLRQRFGTLTGVERPVQEGDFVSIDLSATVDGQEVPEASTTGLSHEVGSGQLIEGLDEALIGLSAGESKEFTSTLVAGEHAGKEAVITVTVQSVKERELPEADDEFAQLASEFDTLEELKADLRSRVERVKKVQQAGEIRDKVLEALLEKTEVPLPEKVVQAEIDAVLHDAVHGFDHDEAKLAEALEAQGSSRAEFDKDTKEAAEKSVKTQLLLDAIAEAEGTQVGQEELTERILFQAQRYGMAPEQFIQQVQQAGQLGAVFADVRRGKALAGVVGKVKVTDSEGNTVDTAEMFGEPAAEPEQADAAQAGDAEKAAADSE</sequence>